<keyword id="KW-0067">ATP-binding</keyword>
<keyword id="KW-0963">Cytoplasm</keyword>
<keyword id="KW-0418">Kinase</keyword>
<keyword id="KW-0547">Nucleotide-binding</keyword>
<keyword id="KW-1185">Reference proteome</keyword>
<keyword id="KW-0808">Transferase</keyword>
<sequence length="207" mass="23504">MVQGTLYIVSAPSGAGKSSLIQALLKTQPLYDTQVSISHTTRAKRPGENHGEHYFFVSEKEFCQMIDDDAFLEHAKVFENYYGTSRLAIEQVLATGVDVFLDIDWQGAQQIRAKMPTARSIFILPPSKTELDRRLRGRGQDSEEVIAKRMEQAVAEMAHYAEYDYLIVNDDFNLALSDLKTIIRAERLRLGRQKQRHDALISKLLAD</sequence>
<organism>
    <name type="scientific">Yersinia pestis</name>
    <dbReference type="NCBI Taxonomy" id="632"/>
    <lineage>
        <taxon>Bacteria</taxon>
        <taxon>Pseudomonadati</taxon>
        <taxon>Pseudomonadota</taxon>
        <taxon>Gammaproteobacteria</taxon>
        <taxon>Enterobacterales</taxon>
        <taxon>Yersiniaceae</taxon>
        <taxon>Yersinia</taxon>
    </lineage>
</organism>
<gene>
    <name evidence="1" type="primary">gmk</name>
    <name type="ordered locus">YPO0040</name>
    <name type="ordered locus">y0101</name>
    <name type="ordered locus">YP_0041</name>
</gene>
<dbReference type="EC" id="2.7.4.8" evidence="1"/>
<dbReference type="EMBL" id="AL590842">
    <property type="protein sequence ID" value="CAL18730.1"/>
    <property type="molecule type" value="Genomic_DNA"/>
</dbReference>
<dbReference type="EMBL" id="AE009952">
    <property type="protein sequence ID" value="AAM83695.1"/>
    <property type="molecule type" value="Genomic_DNA"/>
</dbReference>
<dbReference type="EMBL" id="AE017042">
    <property type="protein sequence ID" value="AAS60322.1"/>
    <property type="molecule type" value="Genomic_DNA"/>
</dbReference>
<dbReference type="PIR" id="AI0005">
    <property type="entry name" value="AI0005"/>
</dbReference>
<dbReference type="RefSeq" id="WP_002209000.1">
    <property type="nucleotide sequence ID" value="NZ_WUCM01000015.1"/>
</dbReference>
<dbReference type="RefSeq" id="YP_002345136.1">
    <property type="nucleotide sequence ID" value="NC_003143.1"/>
</dbReference>
<dbReference type="SMR" id="Q8ZJQ2"/>
<dbReference type="STRING" id="214092.YPO0040"/>
<dbReference type="PaxDb" id="214092-YPO0040"/>
<dbReference type="DNASU" id="1145048"/>
<dbReference type="EnsemblBacteria" id="AAS60322">
    <property type="protein sequence ID" value="AAS60322"/>
    <property type="gene ID" value="YP_0041"/>
</dbReference>
<dbReference type="GeneID" id="96663512"/>
<dbReference type="KEGG" id="ype:YPO0040"/>
<dbReference type="KEGG" id="ypk:y0101"/>
<dbReference type="KEGG" id="ypm:YP_0041"/>
<dbReference type="PATRIC" id="fig|214092.21.peg.263"/>
<dbReference type="eggNOG" id="COG0194">
    <property type="taxonomic scope" value="Bacteria"/>
</dbReference>
<dbReference type="HOGENOM" id="CLU_001715_1_0_6"/>
<dbReference type="OMA" id="EWAVVHG"/>
<dbReference type="OrthoDB" id="9808150at2"/>
<dbReference type="Proteomes" id="UP000000815">
    <property type="component" value="Chromosome"/>
</dbReference>
<dbReference type="Proteomes" id="UP000001019">
    <property type="component" value="Chromosome"/>
</dbReference>
<dbReference type="Proteomes" id="UP000002490">
    <property type="component" value="Chromosome"/>
</dbReference>
<dbReference type="GO" id="GO:0005829">
    <property type="term" value="C:cytosol"/>
    <property type="evidence" value="ECO:0000318"/>
    <property type="project" value="GO_Central"/>
</dbReference>
<dbReference type="GO" id="GO:0005524">
    <property type="term" value="F:ATP binding"/>
    <property type="evidence" value="ECO:0007669"/>
    <property type="project" value="UniProtKB-UniRule"/>
</dbReference>
<dbReference type="GO" id="GO:0004385">
    <property type="term" value="F:guanylate kinase activity"/>
    <property type="evidence" value="ECO:0000318"/>
    <property type="project" value="GO_Central"/>
</dbReference>
<dbReference type="CDD" id="cd00071">
    <property type="entry name" value="GMPK"/>
    <property type="match status" value="1"/>
</dbReference>
<dbReference type="FunFam" id="3.40.50.300:FF:000855">
    <property type="entry name" value="Guanylate kinase"/>
    <property type="match status" value="1"/>
</dbReference>
<dbReference type="FunFam" id="3.30.63.10:FF:000002">
    <property type="entry name" value="Guanylate kinase 1"/>
    <property type="match status" value="1"/>
</dbReference>
<dbReference type="Gene3D" id="3.30.63.10">
    <property type="entry name" value="Guanylate Kinase phosphate binding domain"/>
    <property type="match status" value="1"/>
</dbReference>
<dbReference type="Gene3D" id="3.40.50.300">
    <property type="entry name" value="P-loop containing nucleotide triphosphate hydrolases"/>
    <property type="match status" value="1"/>
</dbReference>
<dbReference type="HAMAP" id="MF_00328">
    <property type="entry name" value="Guanylate_kinase"/>
    <property type="match status" value="1"/>
</dbReference>
<dbReference type="InterPro" id="IPR008145">
    <property type="entry name" value="GK/Ca_channel_bsu"/>
</dbReference>
<dbReference type="InterPro" id="IPR008144">
    <property type="entry name" value="Guanylate_kin-like_dom"/>
</dbReference>
<dbReference type="InterPro" id="IPR017665">
    <property type="entry name" value="Guanylate_kinase"/>
</dbReference>
<dbReference type="InterPro" id="IPR020590">
    <property type="entry name" value="Guanylate_kinase_CS"/>
</dbReference>
<dbReference type="InterPro" id="IPR027417">
    <property type="entry name" value="P-loop_NTPase"/>
</dbReference>
<dbReference type="NCBIfam" id="TIGR03263">
    <property type="entry name" value="guanyl_kin"/>
    <property type="match status" value="1"/>
</dbReference>
<dbReference type="PANTHER" id="PTHR23117:SF13">
    <property type="entry name" value="GUANYLATE KINASE"/>
    <property type="match status" value="1"/>
</dbReference>
<dbReference type="PANTHER" id="PTHR23117">
    <property type="entry name" value="GUANYLATE KINASE-RELATED"/>
    <property type="match status" value="1"/>
</dbReference>
<dbReference type="Pfam" id="PF00625">
    <property type="entry name" value="Guanylate_kin"/>
    <property type="match status" value="1"/>
</dbReference>
<dbReference type="SMART" id="SM00072">
    <property type="entry name" value="GuKc"/>
    <property type="match status" value="1"/>
</dbReference>
<dbReference type="SUPFAM" id="SSF52540">
    <property type="entry name" value="P-loop containing nucleoside triphosphate hydrolases"/>
    <property type="match status" value="1"/>
</dbReference>
<dbReference type="PROSITE" id="PS00856">
    <property type="entry name" value="GUANYLATE_KINASE_1"/>
    <property type="match status" value="1"/>
</dbReference>
<dbReference type="PROSITE" id="PS50052">
    <property type="entry name" value="GUANYLATE_KINASE_2"/>
    <property type="match status" value="1"/>
</dbReference>
<reference key="1">
    <citation type="journal article" date="2001" name="Nature">
        <title>Genome sequence of Yersinia pestis, the causative agent of plague.</title>
        <authorList>
            <person name="Parkhill J."/>
            <person name="Wren B.W."/>
            <person name="Thomson N.R."/>
            <person name="Titball R.W."/>
            <person name="Holden M.T.G."/>
            <person name="Prentice M.B."/>
            <person name="Sebaihia M."/>
            <person name="James K.D."/>
            <person name="Churcher C.M."/>
            <person name="Mungall K.L."/>
            <person name="Baker S."/>
            <person name="Basham D."/>
            <person name="Bentley S.D."/>
            <person name="Brooks K."/>
            <person name="Cerdeno-Tarraga A.-M."/>
            <person name="Chillingworth T."/>
            <person name="Cronin A."/>
            <person name="Davies R.M."/>
            <person name="Davis P."/>
            <person name="Dougan G."/>
            <person name="Feltwell T."/>
            <person name="Hamlin N."/>
            <person name="Holroyd S."/>
            <person name="Jagels K."/>
            <person name="Karlyshev A.V."/>
            <person name="Leather S."/>
            <person name="Moule S."/>
            <person name="Oyston P.C.F."/>
            <person name="Quail M.A."/>
            <person name="Rutherford K.M."/>
            <person name="Simmonds M."/>
            <person name="Skelton J."/>
            <person name="Stevens K."/>
            <person name="Whitehead S."/>
            <person name="Barrell B.G."/>
        </authorList>
    </citation>
    <scope>NUCLEOTIDE SEQUENCE [LARGE SCALE GENOMIC DNA]</scope>
    <source>
        <strain>CO-92 / Biovar Orientalis</strain>
    </source>
</reference>
<reference key="2">
    <citation type="journal article" date="2002" name="J. Bacteriol.">
        <title>Genome sequence of Yersinia pestis KIM.</title>
        <authorList>
            <person name="Deng W."/>
            <person name="Burland V."/>
            <person name="Plunkett G. III"/>
            <person name="Boutin A."/>
            <person name="Mayhew G.F."/>
            <person name="Liss P."/>
            <person name="Perna N.T."/>
            <person name="Rose D.J."/>
            <person name="Mau B."/>
            <person name="Zhou S."/>
            <person name="Schwartz D.C."/>
            <person name="Fetherston J.D."/>
            <person name="Lindler L.E."/>
            <person name="Brubaker R.R."/>
            <person name="Plano G.V."/>
            <person name="Straley S.C."/>
            <person name="McDonough K.A."/>
            <person name="Nilles M.L."/>
            <person name="Matson J.S."/>
            <person name="Blattner F.R."/>
            <person name="Perry R.D."/>
        </authorList>
    </citation>
    <scope>NUCLEOTIDE SEQUENCE [LARGE SCALE GENOMIC DNA]</scope>
    <source>
        <strain>KIM10+ / Biovar Mediaevalis</strain>
    </source>
</reference>
<reference key="3">
    <citation type="journal article" date="2004" name="DNA Res.">
        <title>Complete genome sequence of Yersinia pestis strain 91001, an isolate avirulent to humans.</title>
        <authorList>
            <person name="Song Y."/>
            <person name="Tong Z."/>
            <person name="Wang J."/>
            <person name="Wang L."/>
            <person name="Guo Z."/>
            <person name="Han Y."/>
            <person name="Zhang J."/>
            <person name="Pei D."/>
            <person name="Zhou D."/>
            <person name="Qin H."/>
            <person name="Pang X."/>
            <person name="Han Y."/>
            <person name="Zhai J."/>
            <person name="Li M."/>
            <person name="Cui B."/>
            <person name="Qi Z."/>
            <person name="Jin L."/>
            <person name="Dai R."/>
            <person name="Chen F."/>
            <person name="Li S."/>
            <person name="Ye C."/>
            <person name="Du Z."/>
            <person name="Lin W."/>
            <person name="Wang J."/>
            <person name="Yu J."/>
            <person name="Yang H."/>
            <person name="Wang J."/>
            <person name="Huang P."/>
            <person name="Yang R."/>
        </authorList>
    </citation>
    <scope>NUCLEOTIDE SEQUENCE [LARGE SCALE GENOMIC DNA]</scope>
    <source>
        <strain>91001 / Biovar Mediaevalis</strain>
    </source>
</reference>
<evidence type="ECO:0000255" key="1">
    <source>
        <dbReference type="HAMAP-Rule" id="MF_00328"/>
    </source>
</evidence>
<comment type="function">
    <text evidence="1">Essential for recycling GMP and indirectly, cGMP.</text>
</comment>
<comment type="catalytic activity">
    <reaction evidence="1">
        <text>GMP + ATP = GDP + ADP</text>
        <dbReference type="Rhea" id="RHEA:20780"/>
        <dbReference type="ChEBI" id="CHEBI:30616"/>
        <dbReference type="ChEBI" id="CHEBI:58115"/>
        <dbReference type="ChEBI" id="CHEBI:58189"/>
        <dbReference type="ChEBI" id="CHEBI:456216"/>
        <dbReference type="EC" id="2.7.4.8"/>
    </reaction>
</comment>
<comment type="subcellular location">
    <subcellularLocation>
        <location evidence="1">Cytoplasm</location>
    </subcellularLocation>
</comment>
<comment type="similarity">
    <text evidence="1">Belongs to the guanylate kinase family.</text>
</comment>
<proteinExistence type="inferred from homology"/>
<accession>Q8ZJQ2</accession>
<accession>Q0WKQ2</accession>
<feature type="chain" id="PRO_0000170647" description="Guanylate kinase">
    <location>
        <begin position="1"/>
        <end position="207"/>
    </location>
</feature>
<feature type="domain" description="Guanylate kinase-like" evidence="1">
    <location>
        <begin position="4"/>
        <end position="184"/>
    </location>
</feature>
<feature type="binding site" evidence="1">
    <location>
        <begin position="11"/>
        <end position="18"/>
    </location>
    <ligand>
        <name>ATP</name>
        <dbReference type="ChEBI" id="CHEBI:30616"/>
    </ligand>
</feature>
<protein>
    <recommendedName>
        <fullName evidence="1">Guanylate kinase</fullName>
        <ecNumber evidence="1">2.7.4.8</ecNumber>
    </recommendedName>
    <alternativeName>
        <fullName evidence="1">GMP kinase</fullName>
    </alternativeName>
</protein>
<name>KGUA_YERPE</name>